<sequence length="39" mass="4460">MQATLIKPTIFTHQPILEKLFKSQSMTQEESXQLFAAIV</sequence>
<reference key="1">
    <citation type="journal article" date="1978" name="J. Biol. Chem.">
        <title>Purification and properties of a third form of anthranilate-5-phosphoribosylpyrophosphate phosphoribosyltransferase from the Enterobacteriaceae.</title>
        <authorList>
            <person name="Largen M."/>
            <person name="Mills S.E."/>
            <person name="Rowe J."/>
            <person name="Yanofsky C."/>
        </authorList>
    </citation>
    <scope>PROTEIN SEQUENCE</scope>
    <source>
        <strain>TRP9</strain>
    </source>
</reference>
<feature type="chain" id="PRO_0000154447" description="Anthranilate phosphoribosyltransferase">
    <location>
        <begin position="1"/>
        <end position="39" status="greater than"/>
    </location>
</feature>
<feature type="non-terminal residue">
    <location>
        <position position="39"/>
    </location>
</feature>
<proteinExistence type="evidence at protein level"/>
<gene>
    <name type="primary">trpD</name>
</gene>
<evidence type="ECO:0000250" key="1"/>
<evidence type="ECO:0000305" key="2"/>
<accession>P12320</accession>
<organism>
    <name type="scientific">Pectobacterium carotovorum</name>
    <name type="common">Erwinia carotovora</name>
    <dbReference type="NCBI Taxonomy" id="554"/>
    <lineage>
        <taxon>Bacteria</taxon>
        <taxon>Pseudomonadati</taxon>
        <taxon>Pseudomonadota</taxon>
        <taxon>Gammaproteobacteria</taxon>
        <taxon>Enterobacterales</taxon>
        <taxon>Pectobacteriaceae</taxon>
        <taxon>Pectobacterium</taxon>
    </lineage>
</organism>
<comment type="function">
    <text evidence="1">Catalyzes the transfer of the phosphoribosyl group of 5-phosphorylribose-1-pyrophosphate (PRPP) to anthranilate to yield N-(5'-phosphoribosyl)-anthranilate (PRA).</text>
</comment>
<comment type="catalytic activity">
    <reaction>
        <text>N-(5-phospho-beta-D-ribosyl)anthranilate + diphosphate = 5-phospho-alpha-D-ribose 1-diphosphate + anthranilate</text>
        <dbReference type="Rhea" id="RHEA:11768"/>
        <dbReference type="ChEBI" id="CHEBI:16567"/>
        <dbReference type="ChEBI" id="CHEBI:18277"/>
        <dbReference type="ChEBI" id="CHEBI:33019"/>
        <dbReference type="ChEBI" id="CHEBI:58017"/>
        <dbReference type="EC" id="2.4.2.18"/>
    </reaction>
</comment>
<comment type="pathway">
    <text>Amino-acid biosynthesis; L-tryptophan biosynthesis; L-tryptophan from chorismate: step 2/5.</text>
</comment>
<comment type="subunit">
    <text>Homodimer.</text>
</comment>
<comment type="similarity">
    <text evidence="2">Belongs to the anthranilate phosphoribosyltransferase family.</text>
</comment>
<name>TRPD_PECCA</name>
<keyword id="KW-0028">Amino-acid biosynthesis</keyword>
<keyword id="KW-0057">Aromatic amino acid biosynthesis</keyword>
<keyword id="KW-0903">Direct protein sequencing</keyword>
<keyword id="KW-0328">Glycosyltransferase</keyword>
<keyword id="KW-0460">Magnesium</keyword>
<keyword id="KW-0479">Metal-binding</keyword>
<keyword id="KW-0808">Transferase</keyword>
<keyword id="KW-0822">Tryptophan biosynthesis</keyword>
<protein>
    <recommendedName>
        <fullName>Anthranilate phosphoribosyltransferase</fullName>
        <ecNumber>2.4.2.18</ecNumber>
    </recommendedName>
</protein>
<dbReference type="EC" id="2.4.2.18"/>
<dbReference type="PIR" id="A05003">
    <property type="entry name" value="A05003"/>
</dbReference>
<dbReference type="UniPathway" id="UPA00035">
    <property type="reaction ID" value="UER00041"/>
</dbReference>
<dbReference type="GO" id="GO:0004048">
    <property type="term" value="F:anthranilate phosphoribosyltransferase activity"/>
    <property type="evidence" value="ECO:0007669"/>
    <property type="project" value="UniProtKB-EC"/>
</dbReference>
<dbReference type="GO" id="GO:0046872">
    <property type="term" value="F:metal ion binding"/>
    <property type="evidence" value="ECO:0007669"/>
    <property type="project" value="UniProtKB-KW"/>
</dbReference>
<dbReference type="GO" id="GO:0000162">
    <property type="term" value="P:L-tryptophan biosynthetic process"/>
    <property type="evidence" value="ECO:0007669"/>
    <property type="project" value="UniProtKB-UniPathway"/>
</dbReference>
<dbReference type="Gene3D" id="1.20.970.10">
    <property type="entry name" value="Transferase, Pyrimidine Nucleoside Phosphorylase, Chain C"/>
    <property type="match status" value="1"/>
</dbReference>